<sequence>MIRIPRGTQDILPEDSSKWRYIENQLDKLMKLYNYKEIRTPIFESTDLFARGVGDSTDVVQKEMYTFKDKGDRSITLRPEGTAAVVRSYIENKMQGIPNQPVKLYYNGPMFRYERKQKGRYRQFTQFGVEAIGAENPSMDAEVLAMVMHIYESFGLKHLKLVINSIGDADSRKEYNEALIRHFEPVIDTFCDDCKSRLHTNPMRILDCKIDRDKEAVKNAPRITDYLNDDSKAYFNEVKTHLDDLGISYVEDPNLVRGLDYYTHTAFELMMDNPNYDGAITTLCGGGRYNGLLELLDGPNQTGIGFALSIERLLLALEEEGIELDVEDTFDLFIVTMGEEAERYSVKLLNQLRKSGIKADKDYLQRKVKGQMKQADRLNAQYTVVIGDQELENEVIDVKDMSTGETETINLNNLVNYFQEKNN</sequence>
<name>SYH_STAHJ</name>
<gene>
    <name evidence="1" type="primary">hisS</name>
    <name type="ordered locus">SH1290</name>
</gene>
<feature type="chain" id="PRO_0000136258" description="Histidine--tRNA ligase">
    <location>
        <begin position="1"/>
        <end position="423"/>
    </location>
</feature>
<dbReference type="EC" id="6.1.1.21" evidence="1"/>
<dbReference type="EMBL" id="AP006716">
    <property type="protein sequence ID" value="BAE04599.1"/>
    <property type="molecule type" value="Genomic_DNA"/>
</dbReference>
<dbReference type="RefSeq" id="WP_011275588.1">
    <property type="nucleotide sequence ID" value="NC_007168.1"/>
</dbReference>
<dbReference type="SMR" id="Q4L6X6"/>
<dbReference type="GeneID" id="93780692"/>
<dbReference type="KEGG" id="sha:SH1290"/>
<dbReference type="eggNOG" id="COG0124">
    <property type="taxonomic scope" value="Bacteria"/>
</dbReference>
<dbReference type="HOGENOM" id="CLU_025113_1_1_9"/>
<dbReference type="OrthoDB" id="9800814at2"/>
<dbReference type="Proteomes" id="UP000000543">
    <property type="component" value="Chromosome"/>
</dbReference>
<dbReference type="GO" id="GO:0005737">
    <property type="term" value="C:cytoplasm"/>
    <property type="evidence" value="ECO:0007669"/>
    <property type="project" value="UniProtKB-SubCell"/>
</dbReference>
<dbReference type="GO" id="GO:0005524">
    <property type="term" value="F:ATP binding"/>
    <property type="evidence" value="ECO:0007669"/>
    <property type="project" value="UniProtKB-UniRule"/>
</dbReference>
<dbReference type="GO" id="GO:0140096">
    <property type="term" value="F:catalytic activity, acting on a protein"/>
    <property type="evidence" value="ECO:0007669"/>
    <property type="project" value="UniProtKB-ARBA"/>
</dbReference>
<dbReference type="GO" id="GO:0004821">
    <property type="term" value="F:histidine-tRNA ligase activity"/>
    <property type="evidence" value="ECO:0007669"/>
    <property type="project" value="UniProtKB-UniRule"/>
</dbReference>
<dbReference type="GO" id="GO:0016740">
    <property type="term" value="F:transferase activity"/>
    <property type="evidence" value="ECO:0007669"/>
    <property type="project" value="UniProtKB-ARBA"/>
</dbReference>
<dbReference type="GO" id="GO:0006427">
    <property type="term" value="P:histidyl-tRNA aminoacylation"/>
    <property type="evidence" value="ECO:0007669"/>
    <property type="project" value="UniProtKB-UniRule"/>
</dbReference>
<dbReference type="CDD" id="cd00773">
    <property type="entry name" value="HisRS-like_core"/>
    <property type="match status" value="1"/>
</dbReference>
<dbReference type="CDD" id="cd00859">
    <property type="entry name" value="HisRS_anticodon"/>
    <property type="match status" value="1"/>
</dbReference>
<dbReference type="FunFam" id="3.30.930.10:FF:000005">
    <property type="entry name" value="Histidine--tRNA ligase"/>
    <property type="match status" value="1"/>
</dbReference>
<dbReference type="Gene3D" id="3.40.50.800">
    <property type="entry name" value="Anticodon-binding domain"/>
    <property type="match status" value="1"/>
</dbReference>
<dbReference type="Gene3D" id="3.30.930.10">
    <property type="entry name" value="Bira Bifunctional Protein, Domain 2"/>
    <property type="match status" value="1"/>
</dbReference>
<dbReference type="HAMAP" id="MF_00127">
    <property type="entry name" value="His_tRNA_synth"/>
    <property type="match status" value="1"/>
</dbReference>
<dbReference type="InterPro" id="IPR006195">
    <property type="entry name" value="aa-tRNA-synth_II"/>
</dbReference>
<dbReference type="InterPro" id="IPR045864">
    <property type="entry name" value="aa-tRNA-synth_II/BPL/LPL"/>
</dbReference>
<dbReference type="InterPro" id="IPR004154">
    <property type="entry name" value="Anticodon-bd"/>
</dbReference>
<dbReference type="InterPro" id="IPR036621">
    <property type="entry name" value="Anticodon-bd_dom_sf"/>
</dbReference>
<dbReference type="InterPro" id="IPR015807">
    <property type="entry name" value="His-tRNA-ligase"/>
</dbReference>
<dbReference type="InterPro" id="IPR041715">
    <property type="entry name" value="HisRS-like_core"/>
</dbReference>
<dbReference type="InterPro" id="IPR004516">
    <property type="entry name" value="HisRS/HisZ"/>
</dbReference>
<dbReference type="InterPro" id="IPR033656">
    <property type="entry name" value="HisRS_anticodon"/>
</dbReference>
<dbReference type="NCBIfam" id="TIGR00442">
    <property type="entry name" value="hisS"/>
    <property type="match status" value="1"/>
</dbReference>
<dbReference type="PANTHER" id="PTHR43707:SF1">
    <property type="entry name" value="HISTIDINE--TRNA LIGASE, MITOCHONDRIAL-RELATED"/>
    <property type="match status" value="1"/>
</dbReference>
<dbReference type="PANTHER" id="PTHR43707">
    <property type="entry name" value="HISTIDYL-TRNA SYNTHETASE"/>
    <property type="match status" value="1"/>
</dbReference>
<dbReference type="Pfam" id="PF03129">
    <property type="entry name" value="HGTP_anticodon"/>
    <property type="match status" value="1"/>
</dbReference>
<dbReference type="Pfam" id="PF13393">
    <property type="entry name" value="tRNA-synt_His"/>
    <property type="match status" value="1"/>
</dbReference>
<dbReference type="PIRSF" id="PIRSF001549">
    <property type="entry name" value="His-tRNA_synth"/>
    <property type="match status" value="1"/>
</dbReference>
<dbReference type="SUPFAM" id="SSF52954">
    <property type="entry name" value="Class II aaRS ABD-related"/>
    <property type="match status" value="1"/>
</dbReference>
<dbReference type="SUPFAM" id="SSF55681">
    <property type="entry name" value="Class II aaRS and biotin synthetases"/>
    <property type="match status" value="1"/>
</dbReference>
<dbReference type="PROSITE" id="PS50862">
    <property type="entry name" value="AA_TRNA_LIGASE_II"/>
    <property type="match status" value="1"/>
</dbReference>
<reference key="1">
    <citation type="journal article" date="2005" name="J. Bacteriol.">
        <title>Whole-genome sequencing of Staphylococcus haemolyticus uncovers the extreme plasticity of its genome and the evolution of human-colonizing staphylococcal species.</title>
        <authorList>
            <person name="Takeuchi F."/>
            <person name="Watanabe S."/>
            <person name="Baba T."/>
            <person name="Yuzawa H."/>
            <person name="Ito T."/>
            <person name="Morimoto Y."/>
            <person name="Kuroda M."/>
            <person name="Cui L."/>
            <person name="Takahashi M."/>
            <person name="Ankai A."/>
            <person name="Baba S."/>
            <person name="Fukui S."/>
            <person name="Lee J.C."/>
            <person name="Hiramatsu K."/>
        </authorList>
    </citation>
    <scope>NUCLEOTIDE SEQUENCE [LARGE SCALE GENOMIC DNA]</scope>
    <source>
        <strain>JCSC1435</strain>
    </source>
</reference>
<evidence type="ECO:0000255" key="1">
    <source>
        <dbReference type="HAMAP-Rule" id="MF_00127"/>
    </source>
</evidence>
<protein>
    <recommendedName>
        <fullName evidence="1">Histidine--tRNA ligase</fullName>
        <ecNumber evidence="1">6.1.1.21</ecNumber>
    </recommendedName>
    <alternativeName>
        <fullName evidence="1">Histidyl-tRNA synthetase</fullName>
        <shortName evidence="1">HisRS</shortName>
    </alternativeName>
</protein>
<keyword id="KW-0030">Aminoacyl-tRNA synthetase</keyword>
<keyword id="KW-0067">ATP-binding</keyword>
<keyword id="KW-0963">Cytoplasm</keyword>
<keyword id="KW-0436">Ligase</keyword>
<keyword id="KW-0547">Nucleotide-binding</keyword>
<keyword id="KW-0648">Protein biosynthesis</keyword>
<accession>Q4L6X6</accession>
<organism>
    <name type="scientific">Staphylococcus haemolyticus (strain JCSC1435)</name>
    <dbReference type="NCBI Taxonomy" id="279808"/>
    <lineage>
        <taxon>Bacteria</taxon>
        <taxon>Bacillati</taxon>
        <taxon>Bacillota</taxon>
        <taxon>Bacilli</taxon>
        <taxon>Bacillales</taxon>
        <taxon>Staphylococcaceae</taxon>
        <taxon>Staphylococcus</taxon>
    </lineage>
</organism>
<proteinExistence type="inferred from homology"/>
<comment type="catalytic activity">
    <reaction evidence="1">
        <text>tRNA(His) + L-histidine + ATP = L-histidyl-tRNA(His) + AMP + diphosphate + H(+)</text>
        <dbReference type="Rhea" id="RHEA:17313"/>
        <dbReference type="Rhea" id="RHEA-COMP:9665"/>
        <dbReference type="Rhea" id="RHEA-COMP:9689"/>
        <dbReference type="ChEBI" id="CHEBI:15378"/>
        <dbReference type="ChEBI" id="CHEBI:30616"/>
        <dbReference type="ChEBI" id="CHEBI:33019"/>
        <dbReference type="ChEBI" id="CHEBI:57595"/>
        <dbReference type="ChEBI" id="CHEBI:78442"/>
        <dbReference type="ChEBI" id="CHEBI:78527"/>
        <dbReference type="ChEBI" id="CHEBI:456215"/>
        <dbReference type="EC" id="6.1.1.21"/>
    </reaction>
</comment>
<comment type="subunit">
    <text evidence="1">Homodimer.</text>
</comment>
<comment type="subcellular location">
    <subcellularLocation>
        <location evidence="1">Cytoplasm</location>
    </subcellularLocation>
</comment>
<comment type="similarity">
    <text evidence="1">Belongs to the class-II aminoacyl-tRNA synthetase family.</text>
</comment>